<sequence>MQTVTMYTGPFCPYCTMAKRLLHAAGVGHIDEIRVDASPEAFAEMQQLSGQRSVPQIFIGETHVGGFTDLYRLQQEGGLDGLLNP</sequence>
<accession>Q9JVU9</accession>
<accession>A1IQA4</accession>
<gene>
    <name type="primary">grx</name>
    <name type="ordered locus">NMA0673</name>
</gene>
<feature type="chain" id="PRO_0000141592" description="Glutaredoxin">
    <location>
        <begin position="1"/>
        <end position="85"/>
    </location>
</feature>
<feature type="domain" description="Glutaredoxin" evidence="2">
    <location>
        <begin position="1"/>
        <end position="85"/>
    </location>
</feature>
<feature type="disulfide bond" description="Redox-active" evidence="1">
    <location>
        <begin position="12"/>
        <end position="15"/>
    </location>
</feature>
<keyword id="KW-0963">Cytoplasm</keyword>
<keyword id="KW-1015">Disulfide bond</keyword>
<keyword id="KW-0249">Electron transport</keyword>
<keyword id="KW-0676">Redox-active center</keyword>
<keyword id="KW-0813">Transport</keyword>
<evidence type="ECO:0000250" key="1"/>
<evidence type="ECO:0000255" key="2">
    <source>
        <dbReference type="PROSITE-ProRule" id="PRU00686"/>
    </source>
</evidence>
<evidence type="ECO:0000305" key="3"/>
<name>GLRX_NEIMA</name>
<organism>
    <name type="scientific">Neisseria meningitidis serogroup A / serotype 4A (strain DSM 15465 / Z2491)</name>
    <dbReference type="NCBI Taxonomy" id="122587"/>
    <lineage>
        <taxon>Bacteria</taxon>
        <taxon>Pseudomonadati</taxon>
        <taxon>Pseudomonadota</taxon>
        <taxon>Betaproteobacteria</taxon>
        <taxon>Neisseriales</taxon>
        <taxon>Neisseriaceae</taxon>
        <taxon>Neisseria</taxon>
    </lineage>
</organism>
<proteinExistence type="inferred from homology"/>
<reference key="1">
    <citation type="journal article" date="2000" name="Nature">
        <title>Complete DNA sequence of a serogroup A strain of Neisseria meningitidis Z2491.</title>
        <authorList>
            <person name="Parkhill J."/>
            <person name="Achtman M."/>
            <person name="James K.D."/>
            <person name="Bentley S.D."/>
            <person name="Churcher C.M."/>
            <person name="Klee S.R."/>
            <person name="Morelli G."/>
            <person name="Basham D."/>
            <person name="Brown D."/>
            <person name="Chillingworth T."/>
            <person name="Davies R.M."/>
            <person name="Davis P."/>
            <person name="Devlin K."/>
            <person name="Feltwell T."/>
            <person name="Hamlin N."/>
            <person name="Holroyd S."/>
            <person name="Jagels K."/>
            <person name="Leather S."/>
            <person name="Moule S."/>
            <person name="Mungall K.L."/>
            <person name="Quail M.A."/>
            <person name="Rajandream M.A."/>
            <person name="Rutherford K.M."/>
            <person name="Simmonds M."/>
            <person name="Skelton J."/>
            <person name="Whitehead S."/>
            <person name="Spratt B.G."/>
            <person name="Barrell B.G."/>
        </authorList>
    </citation>
    <scope>NUCLEOTIDE SEQUENCE [LARGE SCALE GENOMIC DNA]</scope>
    <source>
        <strain>DSM 15465 / Z2491</strain>
    </source>
</reference>
<dbReference type="EMBL" id="AL157959">
    <property type="protein sequence ID" value="CAM07933.1"/>
    <property type="molecule type" value="Genomic_DNA"/>
</dbReference>
<dbReference type="PIR" id="F81987">
    <property type="entry name" value="F81987"/>
</dbReference>
<dbReference type="SMR" id="Q9JVU9"/>
<dbReference type="EnsemblBacteria" id="CAM07933">
    <property type="protein sequence ID" value="CAM07933"/>
    <property type="gene ID" value="NMA0673"/>
</dbReference>
<dbReference type="KEGG" id="nma:NMA0673"/>
<dbReference type="HOGENOM" id="CLU_026126_7_3_4"/>
<dbReference type="Proteomes" id="UP000000626">
    <property type="component" value="Chromosome"/>
</dbReference>
<dbReference type="GO" id="GO:0005737">
    <property type="term" value="C:cytoplasm"/>
    <property type="evidence" value="ECO:0007669"/>
    <property type="project" value="UniProtKB-SubCell"/>
</dbReference>
<dbReference type="GO" id="GO:0015035">
    <property type="term" value="F:protein-disulfide reductase activity"/>
    <property type="evidence" value="ECO:0007669"/>
    <property type="project" value="TreeGrafter"/>
</dbReference>
<dbReference type="GO" id="GO:0045454">
    <property type="term" value="P:cell redox homeostasis"/>
    <property type="evidence" value="ECO:0007669"/>
    <property type="project" value="InterPro"/>
</dbReference>
<dbReference type="CDD" id="cd03418">
    <property type="entry name" value="GRX_GRXb_1_3_like"/>
    <property type="match status" value="1"/>
</dbReference>
<dbReference type="Gene3D" id="3.40.30.10">
    <property type="entry name" value="Glutaredoxin"/>
    <property type="match status" value="1"/>
</dbReference>
<dbReference type="InterPro" id="IPR011767">
    <property type="entry name" value="GLR_AS"/>
</dbReference>
<dbReference type="InterPro" id="IPR002109">
    <property type="entry name" value="Glutaredoxin"/>
</dbReference>
<dbReference type="InterPro" id="IPR014025">
    <property type="entry name" value="Glutaredoxin_subgr"/>
</dbReference>
<dbReference type="InterPro" id="IPR011900">
    <property type="entry name" value="GRX_bact"/>
</dbReference>
<dbReference type="InterPro" id="IPR036249">
    <property type="entry name" value="Thioredoxin-like_sf"/>
</dbReference>
<dbReference type="NCBIfam" id="TIGR02181">
    <property type="entry name" value="GRX_bact"/>
    <property type="match status" value="1"/>
</dbReference>
<dbReference type="PANTHER" id="PTHR46679">
    <property type="match status" value="1"/>
</dbReference>
<dbReference type="PANTHER" id="PTHR46679:SF1">
    <property type="entry name" value="GLUTAREDOXIN-2, MITOCHONDRIAL"/>
    <property type="match status" value="1"/>
</dbReference>
<dbReference type="Pfam" id="PF00462">
    <property type="entry name" value="Glutaredoxin"/>
    <property type="match status" value="1"/>
</dbReference>
<dbReference type="PRINTS" id="PR00160">
    <property type="entry name" value="GLUTAREDOXIN"/>
</dbReference>
<dbReference type="SUPFAM" id="SSF52833">
    <property type="entry name" value="Thioredoxin-like"/>
    <property type="match status" value="1"/>
</dbReference>
<dbReference type="PROSITE" id="PS00195">
    <property type="entry name" value="GLUTAREDOXIN_1"/>
    <property type="match status" value="1"/>
</dbReference>
<dbReference type="PROSITE" id="PS51354">
    <property type="entry name" value="GLUTAREDOXIN_2"/>
    <property type="match status" value="1"/>
</dbReference>
<protein>
    <recommendedName>
        <fullName>Glutaredoxin</fullName>
    </recommendedName>
</protein>
<comment type="function">
    <text evidence="1">Has a glutathione-disulfide oxidoreductase activity in the presence of NADPH and glutathione reductase. Reduces low molecular weight disulfides and proteins (By similarity).</text>
</comment>
<comment type="subunit">
    <text evidence="1">Monomer.</text>
</comment>
<comment type="subcellular location">
    <subcellularLocation>
        <location evidence="1">Cytoplasm</location>
    </subcellularLocation>
</comment>
<comment type="similarity">
    <text evidence="3">Belongs to the glutaredoxin family.</text>
</comment>